<protein>
    <recommendedName>
        <fullName evidence="1">3-aminoacrylate deaminase RutC</fullName>
        <shortName evidence="1">3-AA deaminase</shortName>
        <ecNumber evidence="1">3.5.-.-</ecNumber>
    </recommendedName>
</protein>
<name>RUTC_AZOC5</name>
<evidence type="ECO:0000255" key="1">
    <source>
        <dbReference type="HAMAP-Rule" id="MF_00831"/>
    </source>
</evidence>
<keyword id="KW-0378">Hydrolase</keyword>
<keyword id="KW-1185">Reference proteome</keyword>
<proteinExistence type="inferred from homology"/>
<comment type="function">
    <text evidence="1">Involved in pyrimidine catabolism. Catalyzes the deamination of 3-aminoacrylate to malonic semialdehyde, a reaction that can also occur spontaneously. RutC may facilitate the reaction and modulate the metabolic fitness, rather than catalyzing essential functions.</text>
</comment>
<comment type="catalytic activity">
    <reaction evidence="1">
        <text>(Z)-3-aminoacrylate + H2O + H(+) = 3-oxopropanoate + NH4(+)</text>
        <dbReference type="Rhea" id="RHEA:34947"/>
        <dbReference type="ChEBI" id="CHEBI:15377"/>
        <dbReference type="ChEBI" id="CHEBI:15378"/>
        <dbReference type="ChEBI" id="CHEBI:28938"/>
        <dbReference type="ChEBI" id="CHEBI:33190"/>
        <dbReference type="ChEBI" id="CHEBI:59894"/>
    </reaction>
</comment>
<comment type="similarity">
    <text evidence="1">Belongs to the RutC family.</text>
</comment>
<organism>
    <name type="scientific">Azorhizobium caulinodans (strain ATCC 43989 / DSM 5975 / JCM 20966 / LMG 6465 / NBRC 14845 / NCIMB 13405 / ORS 571)</name>
    <dbReference type="NCBI Taxonomy" id="438753"/>
    <lineage>
        <taxon>Bacteria</taxon>
        <taxon>Pseudomonadati</taxon>
        <taxon>Pseudomonadota</taxon>
        <taxon>Alphaproteobacteria</taxon>
        <taxon>Hyphomicrobiales</taxon>
        <taxon>Xanthobacteraceae</taxon>
        <taxon>Azorhizobium</taxon>
    </lineage>
</organism>
<sequence>MTSRAIIPPGSGVPLAPYSPGMQADNVIYVSGTLPFDKDNNVVHLGDAACQTRHVLEIIKGVLEAAGSGMADVTFNHIFLTDWANYGAINAVYAEYFPGEKPARYCVQVGLVKPGALVEIATIAHKRA</sequence>
<accession>A8IAD2</accession>
<dbReference type="EC" id="3.5.-.-" evidence="1"/>
<dbReference type="EMBL" id="AP009384">
    <property type="protein sequence ID" value="BAF88492.1"/>
    <property type="molecule type" value="Genomic_DNA"/>
</dbReference>
<dbReference type="RefSeq" id="WP_012171020.1">
    <property type="nucleotide sequence ID" value="NC_009937.1"/>
</dbReference>
<dbReference type="SMR" id="A8IAD2"/>
<dbReference type="STRING" id="438753.AZC_2494"/>
<dbReference type="KEGG" id="azc:AZC_2494"/>
<dbReference type="eggNOG" id="COG0251">
    <property type="taxonomic scope" value="Bacteria"/>
</dbReference>
<dbReference type="HOGENOM" id="CLU_100715_7_3_5"/>
<dbReference type="Proteomes" id="UP000000270">
    <property type="component" value="Chromosome"/>
</dbReference>
<dbReference type="GO" id="GO:0005829">
    <property type="term" value="C:cytosol"/>
    <property type="evidence" value="ECO:0007669"/>
    <property type="project" value="TreeGrafter"/>
</dbReference>
<dbReference type="GO" id="GO:0019239">
    <property type="term" value="F:deaminase activity"/>
    <property type="evidence" value="ECO:0007669"/>
    <property type="project" value="TreeGrafter"/>
</dbReference>
<dbReference type="GO" id="GO:0019740">
    <property type="term" value="P:nitrogen utilization"/>
    <property type="evidence" value="ECO:0007669"/>
    <property type="project" value="UniProtKB-UniRule"/>
</dbReference>
<dbReference type="GO" id="GO:0006212">
    <property type="term" value="P:uracil catabolic process"/>
    <property type="evidence" value="ECO:0007669"/>
    <property type="project" value="UniProtKB-UniRule"/>
</dbReference>
<dbReference type="CDD" id="cd00448">
    <property type="entry name" value="YjgF_YER057c_UK114_family"/>
    <property type="match status" value="1"/>
</dbReference>
<dbReference type="Gene3D" id="3.30.1330.40">
    <property type="entry name" value="RutC-like"/>
    <property type="match status" value="1"/>
</dbReference>
<dbReference type="HAMAP" id="MF_00831">
    <property type="entry name" value="RutC"/>
    <property type="match status" value="1"/>
</dbReference>
<dbReference type="InterPro" id="IPR019898">
    <property type="entry name" value="RutC"/>
</dbReference>
<dbReference type="InterPro" id="IPR035959">
    <property type="entry name" value="RutC-like_sf"/>
</dbReference>
<dbReference type="InterPro" id="IPR006175">
    <property type="entry name" value="YjgF/YER057c/UK114"/>
</dbReference>
<dbReference type="NCBIfam" id="TIGR03610">
    <property type="entry name" value="RutC"/>
    <property type="match status" value="1"/>
</dbReference>
<dbReference type="PANTHER" id="PTHR11803">
    <property type="entry name" value="2-IMINOBUTANOATE/2-IMINOPROPANOATE DEAMINASE RIDA"/>
    <property type="match status" value="1"/>
</dbReference>
<dbReference type="PANTHER" id="PTHR11803:SF58">
    <property type="entry name" value="PROTEIN HMF1-RELATED"/>
    <property type="match status" value="1"/>
</dbReference>
<dbReference type="Pfam" id="PF01042">
    <property type="entry name" value="Ribonuc_L-PSP"/>
    <property type="match status" value="1"/>
</dbReference>
<dbReference type="SUPFAM" id="SSF55298">
    <property type="entry name" value="YjgF-like"/>
    <property type="match status" value="1"/>
</dbReference>
<feature type="chain" id="PRO_0000402712" description="3-aminoacrylate deaminase RutC">
    <location>
        <begin position="1"/>
        <end position="128"/>
    </location>
</feature>
<reference key="1">
    <citation type="submission" date="2007-04" db="EMBL/GenBank/DDBJ databases">
        <title>Complete genome sequence of the nitrogen-fixing bacterium Azorhizobium caulinodans ORS571.</title>
        <authorList>
            <person name="Lee K.B."/>
            <person name="Backer P.D."/>
            <person name="Aono T."/>
            <person name="Liu C.T."/>
            <person name="Suzuki S."/>
            <person name="Suzuki T."/>
            <person name="Kaneko T."/>
            <person name="Yamada M."/>
            <person name="Tabata S."/>
            <person name="Kupfer D.M."/>
            <person name="Najar F.Z."/>
            <person name="Wiley G.B."/>
            <person name="Roe B."/>
            <person name="Binnewies T."/>
            <person name="Ussery D."/>
            <person name="Vereecke D."/>
            <person name="Gevers D."/>
            <person name="Holsters M."/>
            <person name="Oyaizu H."/>
        </authorList>
    </citation>
    <scope>NUCLEOTIDE SEQUENCE [LARGE SCALE GENOMIC DNA]</scope>
    <source>
        <strain>ATCC 43989 / DSM 5975 / JCM 20966 / LMG 6465 / NBRC 14845 / NCIMB 13405 / ORS 571</strain>
    </source>
</reference>
<gene>
    <name evidence="1" type="primary">rutC</name>
    <name type="ordered locus">AZC_2494</name>
</gene>